<name>GCSH_SYNS3</name>
<feature type="chain" id="PRO_0000302448" description="Glycine cleavage system H protein">
    <location>
        <begin position="1"/>
        <end position="129"/>
    </location>
</feature>
<feature type="domain" description="Lipoyl-binding" evidence="2">
    <location>
        <begin position="24"/>
        <end position="106"/>
    </location>
</feature>
<feature type="modified residue" description="N6-lipoyllysine" evidence="1">
    <location>
        <position position="65"/>
    </location>
</feature>
<evidence type="ECO:0000255" key="1">
    <source>
        <dbReference type="HAMAP-Rule" id="MF_00272"/>
    </source>
</evidence>
<evidence type="ECO:0000255" key="2">
    <source>
        <dbReference type="PROSITE-ProRule" id="PRU01066"/>
    </source>
</evidence>
<protein>
    <recommendedName>
        <fullName evidence="1">Glycine cleavage system H protein</fullName>
    </recommendedName>
</protein>
<reference key="1">
    <citation type="journal article" date="2006" name="Proc. Natl. Acad. Sci. U.S.A.">
        <title>Genome sequence of Synechococcus CC9311: insights into adaptation to a coastal environment.</title>
        <authorList>
            <person name="Palenik B."/>
            <person name="Ren Q."/>
            <person name="Dupont C.L."/>
            <person name="Myers G.S."/>
            <person name="Heidelberg J.F."/>
            <person name="Badger J.H."/>
            <person name="Madupu R."/>
            <person name="Nelson W.C."/>
            <person name="Brinkac L.M."/>
            <person name="Dodson R.J."/>
            <person name="Durkin A.S."/>
            <person name="Daugherty S.C."/>
            <person name="Sullivan S.A."/>
            <person name="Khouri H."/>
            <person name="Mohamoud Y."/>
            <person name="Halpin R."/>
            <person name="Paulsen I.T."/>
        </authorList>
    </citation>
    <scope>NUCLEOTIDE SEQUENCE [LARGE SCALE GENOMIC DNA]</scope>
    <source>
        <strain>CC9311</strain>
    </source>
</reference>
<accession>Q0I6E5</accession>
<comment type="function">
    <text evidence="1">The glycine cleavage system catalyzes the degradation of glycine. The H protein shuttles the methylamine group of glycine from the P protein to the T protein.</text>
</comment>
<comment type="cofactor">
    <cofactor evidence="1">
        <name>(R)-lipoate</name>
        <dbReference type="ChEBI" id="CHEBI:83088"/>
    </cofactor>
    <text evidence="1">Binds 1 lipoyl cofactor covalently.</text>
</comment>
<comment type="subunit">
    <text evidence="1">The glycine cleavage system is composed of four proteins: P, T, L and H.</text>
</comment>
<comment type="similarity">
    <text evidence="1">Belongs to the GcvH family.</text>
</comment>
<sequence length="129" mass="14204">MAFDFPDQFRFADSHEYVRQEAELVRVGLSAYAVDQLGDIVFVDLPEVGDDLSRGTSFGTVESVKAVEEMYAPITGKVIQRNEAVLANPEELQNDPHGEGWLLVIRPSELAQIEELMDSATYSAKVAAA</sequence>
<proteinExistence type="inferred from homology"/>
<keyword id="KW-0450">Lipoyl</keyword>
<keyword id="KW-1185">Reference proteome</keyword>
<dbReference type="EMBL" id="CP000435">
    <property type="protein sequence ID" value="ABI47596.1"/>
    <property type="molecule type" value="Genomic_DNA"/>
</dbReference>
<dbReference type="RefSeq" id="WP_011620678.1">
    <property type="nucleotide sequence ID" value="NC_008319.1"/>
</dbReference>
<dbReference type="SMR" id="Q0I6E5"/>
<dbReference type="STRING" id="64471.sync_2789"/>
<dbReference type="KEGG" id="syg:sync_2789"/>
<dbReference type="eggNOG" id="COG0509">
    <property type="taxonomic scope" value="Bacteria"/>
</dbReference>
<dbReference type="HOGENOM" id="CLU_097408_2_2_3"/>
<dbReference type="OrthoDB" id="9796712at2"/>
<dbReference type="Proteomes" id="UP000001961">
    <property type="component" value="Chromosome"/>
</dbReference>
<dbReference type="GO" id="GO:0005829">
    <property type="term" value="C:cytosol"/>
    <property type="evidence" value="ECO:0007669"/>
    <property type="project" value="TreeGrafter"/>
</dbReference>
<dbReference type="GO" id="GO:0005960">
    <property type="term" value="C:glycine cleavage complex"/>
    <property type="evidence" value="ECO:0007669"/>
    <property type="project" value="InterPro"/>
</dbReference>
<dbReference type="GO" id="GO:0019464">
    <property type="term" value="P:glycine decarboxylation via glycine cleavage system"/>
    <property type="evidence" value="ECO:0007669"/>
    <property type="project" value="UniProtKB-UniRule"/>
</dbReference>
<dbReference type="CDD" id="cd06848">
    <property type="entry name" value="GCS_H"/>
    <property type="match status" value="1"/>
</dbReference>
<dbReference type="Gene3D" id="2.40.50.100">
    <property type="match status" value="1"/>
</dbReference>
<dbReference type="HAMAP" id="MF_00272">
    <property type="entry name" value="GcvH"/>
    <property type="match status" value="1"/>
</dbReference>
<dbReference type="InterPro" id="IPR003016">
    <property type="entry name" value="2-oxoA_DH_lipoyl-BS"/>
</dbReference>
<dbReference type="InterPro" id="IPR000089">
    <property type="entry name" value="Biotin_lipoyl"/>
</dbReference>
<dbReference type="InterPro" id="IPR002930">
    <property type="entry name" value="GCV_H"/>
</dbReference>
<dbReference type="InterPro" id="IPR033753">
    <property type="entry name" value="GCV_H/Fam206"/>
</dbReference>
<dbReference type="InterPro" id="IPR017453">
    <property type="entry name" value="GCV_H_sub"/>
</dbReference>
<dbReference type="InterPro" id="IPR011053">
    <property type="entry name" value="Single_hybrid_motif"/>
</dbReference>
<dbReference type="NCBIfam" id="TIGR00527">
    <property type="entry name" value="gcvH"/>
    <property type="match status" value="1"/>
</dbReference>
<dbReference type="NCBIfam" id="NF002270">
    <property type="entry name" value="PRK01202.1"/>
    <property type="match status" value="1"/>
</dbReference>
<dbReference type="PANTHER" id="PTHR11715">
    <property type="entry name" value="GLYCINE CLEAVAGE SYSTEM H PROTEIN"/>
    <property type="match status" value="1"/>
</dbReference>
<dbReference type="PANTHER" id="PTHR11715:SF3">
    <property type="entry name" value="GLYCINE CLEAVAGE SYSTEM H PROTEIN-RELATED"/>
    <property type="match status" value="1"/>
</dbReference>
<dbReference type="Pfam" id="PF01597">
    <property type="entry name" value="GCV_H"/>
    <property type="match status" value="1"/>
</dbReference>
<dbReference type="SUPFAM" id="SSF51230">
    <property type="entry name" value="Single hybrid motif"/>
    <property type="match status" value="1"/>
</dbReference>
<dbReference type="PROSITE" id="PS50968">
    <property type="entry name" value="BIOTINYL_LIPOYL"/>
    <property type="match status" value="1"/>
</dbReference>
<dbReference type="PROSITE" id="PS00189">
    <property type="entry name" value="LIPOYL"/>
    <property type="match status" value="1"/>
</dbReference>
<organism>
    <name type="scientific">Synechococcus sp. (strain CC9311)</name>
    <dbReference type="NCBI Taxonomy" id="64471"/>
    <lineage>
        <taxon>Bacteria</taxon>
        <taxon>Bacillati</taxon>
        <taxon>Cyanobacteriota</taxon>
        <taxon>Cyanophyceae</taxon>
        <taxon>Synechococcales</taxon>
        <taxon>Synechococcaceae</taxon>
        <taxon>Synechococcus</taxon>
    </lineage>
</organism>
<gene>
    <name evidence="1" type="primary">gcvH</name>
    <name type="ordered locus">sync_2789</name>
</gene>